<protein>
    <recommendedName>
        <fullName>Histone H1, sperm</fullName>
    </recommendedName>
</protein>
<comment type="function">
    <text>Histones H1 are necessary for the condensation of nucleosome chains into higher-order structures.</text>
</comment>
<comment type="subcellular location">
    <subcellularLocation>
        <location evidence="5">Nucleus</location>
    </subcellularLocation>
    <subcellularLocation>
        <location>Chromosome</location>
    </subcellularLocation>
</comment>
<comment type="similarity">
    <text evidence="1">Belongs to the histone H1/H5 family.</text>
</comment>
<accession>Q99284</accession>
<reference evidence="5" key="1">
    <citation type="journal article" date="1982" name="Biochim. Biophys. Acta">
        <title>A partial structure of histone h1 from sperm of the sea urchin Sphaerechinus granulosus.</title>
        <authorList>
            <person name="Strickland W.N."/>
            <person name="Strickland M."/>
            <person name="von Holt C."/>
            <person name="Giancotti V."/>
        </authorList>
    </citation>
    <scope>PROTEIN SEQUENCE</scope>
    <source>
        <tissue evidence="3">Sperm</tissue>
    </source>
</reference>
<proteinExistence type="evidence at protein level"/>
<keyword id="KW-0158">Chromosome</keyword>
<keyword id="KW-0903">Direct protein sequencing</keyword>
<keyword id="KW-0238">DNA-binding</keyword>
<keyword id="KW-0539">Nucleus</keyword>
<feature type="chain" id="PRO_0000273527" description="Histone H1, sperm">
    <location>
        <begin position="1"/>
        <end position="91" status="greater than"/>
    </location>
</feature>
<feature type="domain" description="H15" evidence="1">
    <location>
        <begin position="18"/>
        <end position="91"/>
    </location>
</feature>
<feature type="region of interest" description="Disordered" evidence="2">
    <location>
        <begin position="1"/>
        <end position="25"/>
    </location>
</feature>
<feature type="compositionally biased region" description="Basic residues" evidence="2">
    <location>
        <begin position="9"/>
        <end position="20"/>
    </location>
</feature>
<feature type="non-consecutive residues" evidence="4">
    <location>
        <begin position="25"/>
        <end position="26"/>
    </location>
</feature>
<feature type="non-terminal residue" evidence="4">
    <location>
        <position position="91"/>
    </location>
</feature>
<sequence length="91" mass="9729">PGSPQKRAASPRKSPRKGSPKKSPMIRAAITAMRERKGSSVAKIKSYIAANYRVNMTNLQPHIRRALRSGVASGALKQVTGTGATGRFRVG</sequence>
<dbReference type="SMR" id="Q99284"/>
<dbReference type="GO" id="GO:0000786">
    <property type="term" value="C:nucleosome"/>
    <property type="evidence" value="ECO:0007669"/>
    <property type="project" value="InterPro"/>
</dbReference>
<dbReference type="GO" id="GO:0005634">
    <property type="term" value="C:nucleus"/>
    <property type="evidence" value="ECO:0007669"/>
    <property type="project" value="UniProtKB-SubCell"/>
</dbReference>
<dbReference type="GO" id="GO:0003690">
    <property type="term" value="F:double-stranded DNA binding"/>
    <property type="evidence" value="ECO:0007669"/>
    <property type="project" value="TreeGrafter"/>
</dbReference>
<dbReference type="GO" id="GO:0031492">
    <property type="term" value="F:nucleosomal DNA binding"/>
    <property type="evidence" value="ECO:0007669"/>
    <property type="project" value="TreeGrafter"/>
</dbReference>
<dbReference type="GO" id="GO:0030527">
    <property type="term" value="F:structural constituent of chromatin"/>
    <property type="evidence" value="ECO:0007669"/>
    <property type="project" value="InterPro"/>
</dbReference>
<dbReference type="GO" id="GO:0030261">
    <property type="term" value="P:chromosome condensation"/>
    <property type="evidence" value="ECO:0007669"/>
    <property type="project" value="TreeGrafter"/>
</dbReference>
<dbReference type="GO" id="GO:0045910">
    <property type="term" value="P:negative regulation of DNA recombination"/>
    <property type="evidence" value="ECO:0007669"/>
    <property type="project" value="TreeGrafter"/>
</dbReference>
<dbReference type="GO" id="GO:0006334">
    <property type="term" value="P:nucleosome assembly"/>
    <property type="evidence" value="ECO:0007669"/>
    <property type="project" value="InterPro"/>
</dbReference>
<dbReference type="CDD" id="cd00073">
    <property type="entry name" value="H15"/>
    <property type="match status" value="1"/>
</dbReference>
<dbReference type="FunFam" id="1.10.10.10:FF:000140">
    <property type="entry name" value="Histone H1.0"/>
    <property type="match status" value="1"/>
</dbReference>
<dbReference type="Gene3D" id="1.10.10.10">
    <property type="entry name" value="Winged helix-like DNA-binding domain superfamily/Winged helix DNA-binding domain"/>
    <property type="match status" value="1"/>
</dbReference>
<dbReference type="InterPro" id="IPR005819">
    <property type="entry name" value="H1/H5"/>
</dbReference>
<dbReference type="InterPro" id="IPR005818">
    <property type="entry name" value="Histone_H1/H5_H15"/>
</dbReference>
<dbReference type="InterPro" id="IPR036388">
    <property type="entry name" value="WH-like_DNA-bd_sf"/>
</dbReference>
<dbReference type="InterPro" id="IPR036390">
    <property type="entry name" value="WH_DNA-bd_sf"/>
</dbReference>
<dbReference type="PANTHER" id="PTHR11467">
    <property type="entry name" value="HISTONE H1"/>
    <property type="match status" value="1"/>
</dbReference>
<dbReference type="PANTHER" id="PTHR11467:SF177">
    <property type="entry name" value="HISTONE H1, EARLY EMBRYONIC"/>
    <property type="match status" value="1"/>
</dbReference>
<dbReference type="Pfam" id="PF00538">
    <property type="entry name" value="Linker_histone"/>
    <property type="match status" value="1"/>
</dbReference>
<dbReference type="PRINTS" id="PR00624">
    <property type="entry name" value="HISTONEH5"/>
</dbReference>
<dbReference type="SMART" id="SM00526">
    <property type="entry name" value="H15"/>
    <property type="match status" value="1"/>
</dbReference>
<dbReference type="SUPFAM" id="SSF46785">
    <property type="entry name" value="Winged helix' DNA-binding domain"/>
    <property type="match status" value="1"/>
</dbReference>
<dbReference type="PROSITE" id="PS51504">
    <property type="entry name" value="H15"/>
    <property type="match status" value="1"/>
</dbReference>
<name>H1S_SPHGR</name>
<organism>
    <name type="scientific">Sphaerechinus granularis</name>
    <name type="common">Purple sea urchin</name>
    <dbReference type="NCBI Taxonomy" id="39374"/>
    <lineage>
        <taxon>Eukaryota</taxon>
        <taxon>Metazoa</taxon>
        <taxon>Echinodermata</taxon>
        <taxon>Eleutherozoa</taxon>
        <taxon>Echinozoa</taxon>
        <taxon>Echinoidea</taxon>
        <taxon>Euechinoidea</taxon>
        <taxon>Echinacea</taxon>
        <taxon>Temnopleuroida</taxon>
        <taxon>Toxopneustidae</taxon>
        <taxon>Sphaerechinus</taxon>
    </lineage>
</organism>
<evidence type="ECO:0000255" key="1">
    <source>
        <dbReference type="PROSITE-ProRule" id="PRU00837"/>
    </source>
</evidence>
<evidence type="ECO:0000256" key="2">
    <source>
        <dbReference type="SAM" id="MobiDB-lite"/>
    </source>
</evidence>
<evidence type="ECO:0000269" key="3">
    <source>
    </source>
</evidence>
<evidence type="ECO:0000303" key="4">
    <source>
    </source>
</evidence>
<evidence type="ECO:0000305" key="5"/>